<sequence>MIDVNKFESMQIGLASPDKIRSWSYGEVKKPETINYRTLKPERDGLFDERIFGPTKDWECACGKYKRIRYKGIVCDRCGVEVTRSKVRRERMGHIELAAPVTHIWYFKGIPSRMGLVLDMSPRSLEEIIYFASYVVIDPGDTPMEKKQLLTEREYREKREEYGQTFNAKMGAEAIKELLQDVELDKEVAELKEDLKSAQGQKRTRAIRRLDILDAFKESGNDPAWMVMDTIPVIPPDLRPMVQLEGGRFATSDLNDLYRRVINRNNRLKRLLDLNAPSIIVQNEKRMLQEAVDALIDNGRRGRPVTGPGNRPLKSLSHMLKGKQGRFRQNLLGKRVDYSGRSVIDVGPWLKFYQCGVPREMALELFKPFVMRELVKRDMASNIKNARRKIDRQDDDVWDVLEDVIKERPVLLNRAPTLHRLGIQAFEPVLVDGKSIRLHPLVCEAYNADFDGDQMAIHVPLSDEAMAEARMLMLAAHHILAPKDGKPIVTPSQDVVLGNYYLTMEQKGREGEGMIFKDTNEVLMALQNGYVHLHSRIGIATNSFTDKPFTDDQKQKIMVTSVGKAIFNEIMPKDFPYLNEPTQDNIVNGVPDKYFIDKGEDINDYLEDAPLIDPFKKGFLSDIIAQVFKVYKVQRTSDLLDDMKTLGYTQSTNSGLTVGIADITNLKEKPEIVEAAHKKVATVSKQFRRGLITDEERHDRVIQIWNDAKDDIQQKLVDSFDPNNPISMMSDSGARGNISNFTQLAGMRGLMAAPNGGMMEVPVISNFREGLSVMEMFMSTHGARKGMTDTALKTADSGYLTRRLVDVAQDVIVREEDCGTDRGLVVSAIREGNEMIEPLYDRLVGRFTMKDVLDPKSGEVLVKRNTLMDEDTAQMIVDAGVESVTIRSVFTCNTKHGVCQKCYGRNMATGEQVEVGEAVGTVAAQSIGEPGTQLTMRNFHTGGVAGGEDITQGLPRVQEIFEARNPKGEAVITEVTGEITAIDENPAEHTREITVKGETDTRTYSVPYASSVAVAEGDHINRGERLTGGSIDPKQLIKVRDVMATENYLLSEVQKVYRMQGVDIGDKHVEVMVRQMLRKIRVMDPGDTNILPGTLLDIADFKEKNTQAIISGGIPATGRPVLLGITKASLETNSFLSAASFQETTRVLTDASIRGKNDPLIGLKENVIIGKIIPAGTGMATYRHEEPKSVGTVSDSVYSISDIEKQMKAKDGQQGDTDKK</sequence>
<reference key="1">
    <citation type="journal article" date="2006" name="Proc. Natl. Acad. Sci. U.S.A.">
        <title>Comparative genomics of the lactic acid bacteria.</title>
        <authorList>
            <person name="Makarova K.S."/>
            <person name="Slesarev A."/>
            <person name="Wolf Y.I."/>
            <person name="Sorokin A."/>
            <person name="Mirkin B."/>
            <person name="Koonin E.V."/>
            <person name="Pavlov A."/>
            <person name="Pavlova N."/>
            <person name="Karamychev V."/>
            <person name="Polouchine N."/>
            <person name="Shakhova V."/>
            <person name="Grigoriev I."/>
            <person name="Lou Y."/>
            <person name="Rohksar D."/>
            <person name="Lucas S."/>
            <person name="Huang K."/>
            <person name="Goodstein D.M."/>
            <person name="Hawkins T."/>
            <person name="Plengvidhya V."/>
            <person name="Welker D."/>
            <person name="Hughes J."/>
            <person name="Goh Y."/>
            <person name="Benson A."/>
            <person name="Baldwin K."/>
            <person name="Lee J.-H."/>
            <person name="Diaz-Muniz I."/>
            <person name="Dosti B."/>
            <person name="Smeianov V."/>
            <person name="Wechter W."/>
            <person name="Barabote R."/>
            <person name="Lorca G."/>
            <person name="Altermann E."/>
            <person name="Barrangou R."/>
            <person name="Ganesan B."/>
            <person name="Xie Y."/>
            <person name="Rawsthorne H."/>
            <person name="Tamir D."/>
            <person name="Parker C."/>
            <person name="Breidt F."/>
            <person name="Broadbent J.R."/>
            <person name="Hutkins R."/>
            <person name="O'Sullivan D."/>
            <person name="Steele J."/>
            <person name="Unlu G."/>
            <person name="Saier M.H. Jr."/>
            <person name="Klaenhammer T."/>
            <person name="Richardson P."/>
            <person name="Kozyavkin S."/>
            <person name="Weimer B.C."/>
            <person name="Mills D.A."/>
        </authorList>
    </citation>
    <scope>NUCLEOTIDE SEQUENCE [LARGE SCALE GENOMIC DNA]</scope>
    <source>
        <strain>ATCC 334 / BCRC 17002 / CCUG 31169 / CIP 107868 / KCTC 3260 / NRRL B-441</strain>
    </source>
</reference>
<gene>
    <name evidence="1" type="primary">rpoC</name>
    <name type="ordered locus">LSEI_2515</name>
</gene>
<name>RPOC_LACP3</name>
<feature type="chain" id="PRO_0000308840" description="DNA-directed RNA polymerase subunit beta'">
    <location>
        <begin position="1"/>
        <end position="1220"/>
    </location>
</feature>
<feature type="binding site" evidence="1">
    <location>
        <position position="60"/>
    </location>
    <ligand>
        <name>Zn(2+)</name>
        <dbReference type="ChEBI" id="CHEBI:29105"/>
        <label>1</label>
    </ligand>
</feature>
<feature type="binding site" evidence="1">
    <location>
        <position position="62"/>
    </location>
    <ligand>
        <name>Zn(2+)</name>
        <dbReference type="ChEBI" id="CHEBI:29105"/>
        <label>1</label>
    </ligand>
</feature>
<feature type="binding site" evidence="1">
    <location>
        <position position="75"/>
    </location>
    <ligand>
        <name>Zn(2+)</name>
        <dbReference type="ChEBI" id="CHEBI:29105"/>
        <label>1</label>
    </ligand>
</feature>
<feature type="binding site" evidence="1">
    <location>
        <position position="78"/>
    </location>
    <ligand>
        <name>Zn(2+)</name>
        <dbReference type="ChEBI" id="CHEBI:29105"/>
        <label>1</label>
    </ligand>
</feature>
<feature type="binding site" evidence="1">
    <location>
        <position position="449"/>
    </location>
    <ligand>
        <name>Mg(2+)</name>
        <dbReference type="ChEBI" id="CHEBI:18420"/>
    </ligand>
</feature>
<feature type="binding site" evidence="1">
    <location>
        <position position="451"/>
    </location>
    <ligand>
        <name>Mg(2+)</name>
        <dbReference type="ChEBI" id="CHEBI:18420"/>
    </ligand>
</feature>
<feature type="binding site" evidence="1">
    <location>
        <position position="453"/>
    </location>
    <ligand>
        <name>Mg(2+)</name>
        <dbReference type="ChEBI" id="CHEBI:18420"/>
    </ligand>
</feature>
<feature type="binding site" evidence="1">
    <location>
        <position position="818"/>
    </location>
    <ligand>
        <name>Zn(2+)</name>
        <dbReference type="ChEBI" id="CHEBI:29105"/>
        <label>2</label>
    </ligand>
</feature>
<feature type="binding site" evidence="1">
    <location>
        <position position="892"/>
    </location>
    <ligand>
        <name>Zn(2+)</name>
        <dbReference type="ChEBI" id="CHEBI:29105"/>
        <label>2</label>
    </ligand>
</feature>
<feature type="binding site" evidence="1">
    <location>
        <position position="899"/>
    </location>
    <ligand>
        <name>Zn(2+)</name>
        <dbReference type="ChEBI" id="CHEBI:29105"/>
        <label>2</label>
    </ligand>
</feature>
<feature type="binding site" evidence="1">
    <location>
        <position position="902"/>
    </location>
    <ligand>
        <name>Zn(2+)</name>
        <dbReference type="ChEBI" id="CHEBI:29105"/>
        <label>2</label>
    </ligand>
</feature>
<dbReference type="EC" id="2.7.7.6" evidence="1"/>
<dbReference type="EMBL" id="CP000423">
    <property type="protein sequence ID" value="ABJ71251.1"/>
    <property type="molecule type" value="Genomic_DNA"/>
</dbReference>
<dbReference type="RefSeq" id="WP_003567586.1">
    <property type="nucleotide sequence ID" value="NC_008526.1"/>
</dbReference>
<dbReference type="RefSeq" id="YP_807693.1">
    <property type="nucleotide sequence ID" value="NC_008526.1"/>
</dbReference>
<dbReference type="SMR" id="Q034X1"/>
<dbReference type="STRING" id="321967.LSEI_2515"/>
<dbReference type="PaxDb" id="321967-LSEI_2515"/>
<dbReference type="GeneID" id="57091092"/>
<dbReference type="KEGG" id="lca:LSEI_2515"/>
<dbReference type="PATRIC" id="fig|321967.11.peg.2469"/>
<dbReference type="HOGENOM" id="CLU_000524_3_1_9"/>
<dbReference type="Proteomes" id="UP000001651">
    <property type="component" value="Chromosome"/>
</dbReference>
<dbReference type="GO" id="GO:0000428">
    <property type="term" value="C:DNA-directed RNA polymerase complex"/>
    <property type="evidence" value="ECO:0007669"/>
    <property type="project" value="UniProtKB-KW"/>
</dbReference>
<dbReference type="GO" id="GO:0003677">
    <property type="term" value="F:DNA binding"/>
    <property type="evidence" value="ECO:0007669"/>
    <property type="project" value="UniProtKB-UniRule"/>
</dbReference>
<dbReference type="GO" id="GO:0003899">
    <property type="term" value="F:DNA-directed RNA polymerase activity"/>
    <property type="evidence" value="ECO:0007669"/>
    <property type="project" value="UniProtKB-UniRule"/>
</dbReference>
<dbReference type="GO" id="GO:0000287">
    <property type="term" value="F:magnesium ion binding"/>
    <property type="evidence" value="ECO:0007669"/>
    <property type="project" value="UniProtKB-UniRule"/>
</dbReference>
<dbReference type="GO" id="GO:0008270">
    <property type="term" value="F:zinc ion binding"/>
    <property type="evidence" value="ECO:0007669"/>
    <property type="project" value="UniProtKB-UniRule"/>
</dbReference>
<dbReference type="GO" id="GO:0006351">
    <property type="term" value="P:DNA-templated transcription"/>
    <property type="evidence" value="ECO:0007669"/>
    <property type="project" value="UniProtKB-UniRule"/>
</dbReference>
<dbReference type="CDD" id="cd02655">
    <property type="entry name" value="RNAP_beta'_C"/>
    <property type="match status" value="1"/>
</dbReference>
<dbReference type="CDD" id="cd01609">
    <property type="entry name" value="RNAP_beta'_N"/>
    <property type="match status" value="1"/>
</dbReference>
<dbReference type="FunFam" id="4.10.860.120:FF:000001">
    <property type="entry name" value="DNA-directed RNA polymerase subunit beta"/>
    <property type="match status" value="1"/>
</dbReference>
<dbReference type="Gene3D" id="1.10.132.30">
    <property type="match status" value="1"/>
</dbReference>
<dbReference type="Gene3D" id="1.10.150.390">
    <property type="match status" value="1"/>
</dbReference>
<dbReference type="Gene3D" id="1.10.1790.20">
    <property type="match status" value="1"/>
</dbReference>
<dbReference type="Gene3D" id="1.10.40.90">
    <property type="match status" value="1"/>
</dbReference>
<dbReference type="Gene3D" id="2.40.40.20">
    <property type="match status" value="1"/>
</dbReference>
<dbReference type="Gene3D" id="2.40.50.100">
    <property type="match status" value="1"/>
</dbReference>
<dbReference type="Gene3D" id="4.10.860.120">
    <property type="entry name" value="RNA polymerase II, clamp domain"/>
    <property type="match status" value="1"/>
</dbReference>
<dbReference type="Gene3D" id="1.10.274.100">
    <property type="entry name" value="RNA polymerase Rpb1, domain 3"/>
    <property type="match status" value="1"/>
</dbReference>
<dbReference type="HAMAP" id="MF_01322">
    <property type="entry name" value="RNApol_bact_RpoC"/>
    <property type="match status" value="1"/>
</dbReference>
<dbReference type="InterPro" id="IPR045867">
    <property type="entry name" value="DNA-dir_RpoC_beta_prime"/>
</dbReference>
<dbReference type="InterPro" id="IPR012754">
    <property type="entry name" value="DNA-dir_RpoC_beta_prime_bact"/>
</dbReference>
<dbReference type="InterPro" id="IPR000722">
    <property type="entry name" value="RNA_pol_asu"/>
</dbReference>
<dbReference type="InterPro" id="IPR006592">
    <property type="entry name" value="RNA_pol_N"/>
</dbReference>
<dbReference type="InterPro" id="IPR007080">
    <property type="entry name" value="RNA_pol_Rpb1_1"/>
</dbReference>
<dbReference type="InterPro" id="IPR007066">
    <property type="entry name" value="RNA_pol_Rpb1_3"/>
</dbReference>
<dbReference type="InterPro" id="IPR042102">
    <property type="entry name" value="RNA_pol_Rpb1_3_sf"/>
</dbReference>
<dbReference type="InterPro" id="IPR007083">
    <property type="entry name" value="RNA_pol_Rpb1_4"/>
</dbReference>
<dbReference type="InterPro" id="IPR007081">
    <property type="entry name" value="RNA_pol_Rpb1_5"/>
</dbReference>
<dbReference type="InterPro" id="IPR044893">
    <property type="entry name" value="RNA_pol_Rpb1_clamp_domain"/>
</dbReference>
<dbReference type="InterPro" id="IPR038120">
    <property type="entry name" value="Rpb1_funnel_sf"/>
</dbReference>
<dbReference type="NCBIfam" id="TIGR02386">
    <property type="entry name" value="rpoC_TIGR"/>
    <property type="match status" value="1"/>
</dbReference>
<dbReference type="PANTHER" id="PTHR19376">
    <property type="entry name" value="DNA-DIRECTED RNA POLYMERASE"/>
    <property type="match status" value="1"/>
</dbReference>
<dbReference type="PANTHER" id="PTHR19376:SF54">
    <property type="entry name" value="DNA-DIRECTED RNA POLYMERASE SUBUNIT BETA"/>
    <property type="match status" value="1"/>
</dbReference>
<dbReference type="Pfam" id="PF04997">
    <property type="entry name" value="RNA_pol_Rpb1_1"/>
    <property type="match status" value="1"/>
</dbReference>
<dbReference type="Pfam" id="PF00623">
    <property type="entry name" value="RNA_pol_Rpb1_2"/>
    <property type="match status" value="1"/>
</dbReference>
<dbReference type="Pfam" id="PF04983">
    <property type="entry name" value="RNA_pol_Rpb1_3"/>
    <property type="match status" value="1"/>
</dbReference>
<dbReference type="Pfam" id="PF05000">
    <property type="entry name" value="RNA_pol_Rpb1_4"/>
    <property type="match status" value="1"/>
</dbReference>
<dbReference type="Pfam" id="PF04998">
    <property type="entry name" value="RNA_pol_Rpb1_5"/>
    <property type="match status" value="1"/>
</dbReference>
<dbReference type="SMART" id="SM00663">
    <property type="entry name" value="RPOLA_N"/>
    <property type="match status" value="1"/>
</dbReference>
<dbReference type="SUPFAM" id="SSF64484">
    <property type="entry name" value="beta and beta-prime subunits of DNA dependent RNA-polymerase"/>
    <property type="match status" value="1"/>
</dbReference>
<proteinExistence type="inferred from homology"/>
<evidence type="ECO:0000255" key="1">
    <source>
        <dbReference type="HAMAP-Rule" id="MF_01322"/>
    </source>
</evidence>
<keyword id="KW-0240">DNA-directed RNA polymerase</keyword>
<keyword id="KW-0460">Magnesium</keyword>
<keyword id="KW-0479">Metal-binding</keyword>
<keyword id="KW-0548">Nucleotidyltransferase</keyword>
<keyword id="KW-1185">Reference proteome</keyword>
<keyword id="KW-0804">Transcription</keyword>
<keyword id="KW-0808">Transferase</keyword>
<keyword id="KW-0862">Zinc</keyword>
<comment type="function">
    <text evidence="1">DNA-dependent RNA polymerase catalyzes the transcription of DNA into RNA using the four ribonucleoside triphosphates as substrates.</text>
</comment>
<comment type="catalytic activity">
    <reaction evidence="1">
        <text>RNA(n) + a ribonucleoside 5'-triphosphate = RNA(n+1) + diphosphate</text>
        <dbReference type="Rhea" id="RHEA:21248"/>
        <dbReference type="Rhea" id="RHEA-COMP:14527"/>
        <dbReference type="Rhea" id="RHEA-COMP:17342"/>
        <dbReference type="ChEBI" id="CHEBI:33019"/>
        <dbReference type="ChEBI" id="CHEBI:61557"/>
        <dbReference type="ChEBI" id="CHEBI:140395"/>
        <dbReference type="EC" id="2.7.7.6"/>
    </reaction>
</comment>
<comment type="cofactor">
    <cofactor evidence="1">
        <name>Mg(2+)</name>
        <dbReference type="ChEBI" id="CHEBI:18420"/>
    </cofactor>
    <text evidence="1">Binds 1 Mg(2+) ion per subunit.</text>
</comment>
<comment type="cofactor">
    <cofactor evidence="1">
        <name>Zn(2+)</name>
        <dbReference type="ChEBI" id="CHEBI:29105"/>
    </cofactor>
    <text evidence="1">Binds 2 Zn(2+) ions per subunit.</text>
</comment>
<comment type="subunit">
    <text evidence="1">The RNAP catalytic core consists of 2 alpha, 1 beta, 1 beta' and 1 omega subunit. When a sigma factor is associated with the core the holoenzyme is formed, which can initiate transcription.</text>
</comment>
<comment type="similarity">
    <text evidence="1">Belongs to the RNA polymerase beta' chain family.</text>
</comment>
<protein>
    <recommendedName>
        <fullName evidence="1">DNA-directed RNA polymerase subunit beta'</fullName>
        <shortName evidence="1">RNAP subunit beta'</shortName>
        <ecNumber evidence="1">2.7.7.6</ecNumber>
    </recommendedName>
    <alternativeName>
        <fullName evidence="1">RNA polymerase subunit beta'</fullName>
    </alternativeName>
    <alternativeName>
        <fullName evidence="1">Transcriptase subunit beta'</fullName>
    </alternativeName>
</protein>
<organism>
    <name type="scientific">Lacticaseibacillus paracasei (strain ATCC 334 / BCRC 17002 / CCUG 31169 / CIP 107868 / KCTC 3260 / NRRL B-441)</name>
    <name type="common">Lactobacillus paracasei</name>
    <dbReference type="NCBI Taxonomy" id="321967"/>
    <lineage>
        <taxon>Bacteria</taxon>
        <taxon>Bacillati</taxon>
        <taxon>Bacillota</taxon>
        <taxon>Bacilli</taxon>
        <taxon>Lactobacillales</taxon>
        <taxon>Lactobacillaceae</taxon>
        <taxon>Lacticaseibacillus</taxon>
    </lineage>
</organism>
<accession>Q034X1</accession>